<dbReference type="EC" id="3.4.23.25"/>
<dbReference type="EMBL" id="ABSU01000032">
    <property type="protein sequence ID" value="EFE30240.1"/>
    <property type="molecule type" value="Genomic_DNA"/>
</dbReference>
<dbReference type="RefSeq" id="XP_003010880.1">
    <property type="nucleotide sequence ID" value="XM_003010834.1"/>
</dbReference>
<dbReference type="SMR" id="D4B385"/>
<dbReference type="STRING" id="663331.D4B385"/>
<dbReference type="MEROPS" id="A01.018"/>
<dbReference type="GlyCosmos" id="D4B385">
    <property type="glycosylation" value="2 sites, No reported glycans"/>
</dbReference>
<dbReference type="GeneID" id="9524995"/>
<dbReference type="KEGG" id="abe:ARB_02919"/>
<dbReference type="eggNOG" id="KOG1339">
    <property type="taxonomic scope" value="Eukaryota"/>
</dbReference>
<dbReference type="HOGENOM" id="CLU_013253_3_4_1"/>
<dbReference type="OMA" id="KYDHDAS"/>
<dbReference type="OrthoDB" id="771136at2759"/>
<dbReference type="Proteomes" id="UP000008866">
    <property type="component" value="Unassembled WGS sequence"/>
</dbReference>
<dbReference type="GO" id="GO:0005576">
    <property type="term" value="C:extracellular region"/>
    <property type="evidence" value="ECO:0007669"/>
    <property type="project" value="UniProtKB-SubCell"/>
</dbReference>
<dbReference type="GO" id="GO:0000324">
    <property type="term" value="C:fungal-type vacuole"/>
    <property type="evidence" value="ECO:0007669"/>
    <property type="project" value="TreeGrafter"/>
</dbReference>
<dbReference type="GO" id="GO:0005775">
    <property type="term" value="C:vacuolar lumen"/>
    <property type="evidence" value="ECO:0007669"/>
    <property type="project" value="UniProtKB-SubCell"/>
</dbReference>
<dbReference type="GO" id="GO:0004190">
    <property type="term" value="F:aspartic-type endopeptidase activity"/>
    <property type="evidence" value="ECO:0007669"/>
    <property type="project" value="UniProtKB-KW"/>
</dbReference>
<dbReference type="GO" id="GO:0006508">
    <property type="term" value="P:proteolysis"/>
    <property type="evidence" value="ECO:0007669"/>
    <property type="project" value="UniProtKB-KW"/>
</dbReference>
<dbReference type="FunFam" id="2.40.70.10:FF:000036">
    <property type="entry name" value="Vacuolar aspartic protease"/>
    <property type="match status" value="1"/>
</dbReference>
<dbReference type="FunFam" id="2.40.70.10:FF:000002">
    <property type="entry name" value="Vacuolar aspartic proteinase"/>
    <property type="match status" value="1"/>
</dbReference>
<dbReference type="Gene3D" id="2.40.70.10">
    <property type="entry name" value="Acid Proteases"/>
    <property type="match status" value="2"/>
</dbReference>
<dbReference type="InterPro" id="IPR001461">
    <property type="entry name" value="Aspartic_peptidase_A1"/>
</dbReference>
<dbReference type="InterPro" id="IPR001969">
    <property type="entry name" value="Aspartic_peptidase_AS"/>
</dbReference>
<dbReference type="InterPro" id="IPR033121">
    <property type="entry name" value="PEPTIDASE_A1"/>
</dbReference>
<dbReference type="InterPro" id="IPR021109">
    <property type="entry name" value="Peptidase_aspartic_dom_sf"/>
</dbReference>
<dbReference type="PANTHER" id="PTHR47966">
    <property type="entry name" value="BETA-SITE APP-CLEAVING ENZYME, ISOFORM A-RELATED"/>
    <property type="match status" value="1"/>
</dbReference>
<dbReference type="PANTHER" id="PTHR47966:SF51">
    <property type="entry name" value="BETA-SITE APP-CLEAVING ENZYME, ISOFORM A-RELATED"/>
    <property type="match status" value="1"/>
</dbReference>
<dbReference type="Pfam" id="PF00026">
    <property type="entry name" value="Asp"/>
    <property type="match status" value="1"/>
</dbReference>
<dbReference type="PRINTS" id="PR00792">
    <property type="entry name" value="PEPSIN"/>
</dbReference>
<dbReference type="SUPFAM" id="SSF50630">
    <property type="entry name" value="Acid proteases"/>
    <property type="match status" value="1"/>
</dbReference>
<dbReference type="PROSITE" id="PS00141">
    <property type="entry name" value="ASP_PROTEASE"/>
    <property type="match status" value="2"/>
</dbReference>
<dbReference type="PROSITE" id="PS51767">
    <property type="entry name" value="PEPTIDASE_A1"/>
    <property type="match status" value="1"/>
</dbReference>
<accession>D4B385</accession>
<proteinExistence type="inferred from homology"/>
<protein>
    <recommendedName>
        <fullName>Probable vacuolar protease A</fullName>
        <ecNumber>3.4.23.25</ecNumber>
    </recommendedName>
    <alternativeName>
        <fullName>Aspartic endopeptidase PEP2</fullName>
    </alternativeName>
    <alternativeName>
        <fullName>Aspartic protease PEP2</fullName>
    </alternativeName>
</protein>
<keyword id="KW-0064">Aspartyl protease</keyword>
<keyword id="KW-1015">Disulfide bond</keyword>
<keyword id="KW-0325">Glycoprotein</keyword>
<keyword id="KW-0378">Hydrolase</keyword>
<keyword id="KW-0645">Protease</keyword>
<keyword id="KW-1185">Reference proteome</keyword>
<keyword id="KW-0964">Secreted</keyword>
<keyword id="KW-0732">Signal</keyword>
<keyword id="KW-0926">Vacuole</keyword>
<keyword id="KW-0843">Virulence</keyword>
<keyword id="KW-0865">Zymogen</keyword>
<name>CARP_ARTBC</name>
<evidence type="ECO:0000250" key="1"/>
<evidence type="ECO:0000255" key="2"/>
<evidence type="ECO:0000255" key="3">
    <source>
        <dbReference type="PROSITE-ProRule" id="PRU01103"/>
    </source>
</evidence>
<evidence type="ECO:0000255" key="4">
    <source>
        <dbReference type="PROSITE-ProRule" id="PRU10094"/>
    </source>
</evidence>
<evidence type="ECO:0000305" key="5"/>
<feature type="signal peptide" evidence="2">
    <location>
        <begin position="1"/>
        <end position="18"/>
    </location>
</feature>
<feature type="propeptide" id="PRO_0000397694" description="Activation peptide" evidence="1">
    <location>
        <begin position="19"/>
        <end position="72"/>
    </location>
</feature>
<feature type="chain" id="PRO_0000397695" description="Probable vacuolar protease A">
    <location>
        <begin position="73"/>
        <end position="400"/>
    </location>
</feature>
<feature type="domain" description="Peptidase A1" evidence="3">
    <location>
        <begin position="87"/>
        <end position="397"/>
    </location>
</feature>
<feature type="active site" evidence="4">
    <location>
        <position position="105"/>
    </location>
</feature>
<feature type="active site" evidence="4">
    <location>
        <position position="289"/>
    </location>
</feature>
<feature type="glycosylation site" description="N-linked (GlcNAc...) asparagine" evidence="2">
    <location>
        <position position="140"/>
    </location>
</feature>
<feature type="glycosylation site" description="N-linked (GlcNAc...) asparagine" evidence="2">
    <location>
        <position position="340"/>
    </location>
</feature>
<feature type="disulfide bond" evidence="1">
    <location>
        <begin position="118"/>
        <end position="123"/>
    </location>
</feature>
<feature type="disulfide bond" evidence="1">
    <location>
        <begin position="323"/>
        <end position="356"/>
    </location>
</feature>
<gene>
    <name type="primary">PEP2</name>
    <name type="ORF">ARB_02919</name>
</gene>
<comment type="function">
    <text evidence="1">Vacuolar aspartic endopeptidase which is probably also secreted and contributes to virulence.</text>
</comment>
<comment type="catalytic activity">
    <reaction>
        <text>Hydrolysis of proteins with broad specificity for peptide bonds. Cleaves -Leu-Leu-|-Val-Tyr- bond in a synthetic substrate. Does not act on esters of Tyr or Arg.</text>
        <dbReference type="EC" id="3.4.23.25"/>
    </reaction>
</comment>
<comment type="subcellular location">
    <subcellularLocation>
        <location evidence="1">Vacuole lumen</location>
    </subcellularLocation>
    <subcellularLocation>
        <location evidence="1">Secreted</location>
    </subcellularLocation>
</comment>
<comment type="similarity">
    <text evidence="5">Belongs to the peptidase A1 family.</text>
</comment>
<reference key="1">
    <citation type="journal article" date="2011" name="Genome Biol.">
        <title>Comparative and functional genomics provide insights into the pathogenicity of dermatophytic fungi.</title>
        <authorList>
            <person name="Burmester A."/>
            <person name="Shelest E."/>
            <person name="Gloeckner G."/>
            <person name="Heddergott C."/>
            <person name="Schindler S."/>
            <person name="Staib P."/>
            <person name="Heidel A."/>
            <person name="Felder M."/>
            <person name="Petzold A."/>
            <person name="Szafranski K."/>
            <person name="Feuermann M."/>
            <person name="Pedruzzi I."/>
            <person name="Priebe S."/>
            <person name="Groth M."/>
            <person name="Winkler R."/>
            <person name="Li W."/>
            <person name="Kniemeyer O."/>
            <person name="Schroeckh V."/>
            <person name="Hertweck C."/>
            <person name="Hube B."/>
            <person name="White T.C."/>
            <person name="Platzer M."/>
            <person name="Guthke R."/>
            <person name="Heitman J."/>
            <person name="Woestemeyer J."/>
            <person name="Zipfel P.F."/>
            <person name="Monod M."/>
            <person name="Brakhage A.A."/>
        </authorList>
    </citation>
    <scope>NUCLEOTIDE SEQUENCE [LARGE SCALE GENOMIC DNA]</scope>
    <source>
        <strain>ATCC MYA-4681 / CBS 112371</strain>
    </source>
</reference>
<organism>
    <name type="scientific">Arthroderma benhamiae (strain ATCC MYA-4681 / CBS 112371)</name>
    <name type="common">Trichophyton mentagrophytes</name>
    <dbReference type="NCBI Taxonomy" id="663331"/>
    <lineage>
        <taxon>Eukaryota</taxon>
        <taxon>Fungi</taxon>
        <taxon>Dikarya</taxon>
        <taxon>Ascomycota</taxon>
        <taxon>Pezizomycotina</taxon>
        <taxon>Eurotiomycetes</taxon>
        <taxon>Eurotiomycetidae</taxon>
        <taxon>Onygenales</taxon>
        <taxon>Arthrodermataceae</taxon>
        <taxon>Trichophyton</taxon>
    </lineage>
</organism>
<sequence>MKGSLLLAGATLLGCTSAKLHSLKLKKVSLKEQLEHADIDVQIKSLGQKYMGIRPEQHEQQMFKEQTPIEVESGHNVLIDNFLNAQYFSEISIGTPPQTFKVVLDTGSSNLWVPGKDCSSIACFLHSTYDSSASSTYSKNGTKFAIRYGSGSLEGFVSRDSVKIGDMTIKKQLFAEATSEPGLAFAFGRFDGIMGMGFSSISVNGITPPFYNMIDQGLIDEPVFSFYLGDTNKDGDQSVVTFGGSDTNHFTGDMTTIPLRRKAYWEVDFDAISLGKDTAALENTGIILDTGTSLIALPTTLAEMINTQIGATKSWNGQYTLDCAKRDSLPDVTFTLSGHNFTIGPHDYTLEVSGTCISSFMGMDFPEPVGPLAILGDSFLRRYYSVYDLGKGTVGLAKAK</sequence>